<accession>P0DTL8</accession>
<feature type="chain" id="PRO_0000456945" description="Protein ORF4">
    <location>
        <begin position="1"/>
        <end position="158"/>
    </location>
</feature>
<protein>
    <recommendedName>
        <fullName evidence="2">Protein ORF4</fullName>
    </recommendedName>
</protein>
<name>ORF4_HEVPA</name>
<sequence>MLRGQQIWLSNLTQPQTSAGPVPAVESPPALCSTSLPQVCLDPASPALLPKPTWTLSWSRPGSCVMPGAAAASLLSPRTLRLESPRGAGLSLMRPRPFPLICCCSTCSGPPPSTFLATRIRSQPSILSTPGSFPPSGPIWPPPPGGMLPIAALRMYVS</sequence>
<reference key="1">
    <citation type="journal article" date="2001" name="Proc. Natl. Acad. Sci. U.S.A.">
        <title>Recombinant hepatitis E virus genomes infectious for primates: importance of capping and discovery of a cis-reactive element.</title>
        <authorList>
            <person name="Emerson S.U."/>
            <person name="Zhang M."/>
            <person name="Meng X.J."/>
            <person name="Nguyen H."/>
            <person name="St Claire M."/>
            <person name="Govindarajan S."/>
            <person name="Huang Y.K."/>
            <person name="Purcell R.H."/>
        </authorList>
    </citation>
    <scope>NUCLEOTIDE SEQUENCE [GENOMIC RNA]</scope>
    <source>
        <strain>Isolate pSK-HEV-2</strain>
    </source>
</reference>
<reference key="2">
    <citation type="journal article" date="2016" name="PLoS Pathog.">
        <title>Endoplasmic Reticulum Stress Induced Synthesis of a Novel Viral Factor Mediates Efficient Replication of Genotype-1 Hepatitis E Virus.</title>
        <authorList>
            <person name="Nair V.P."/>
            <person name="Anang S."/>
            <person name="Subramani C."/>
            <person name="Madhvi A."/>
            <person name="Bakshi K."/>
            <person name="Srivastava A."/>
            <person name="Shalimar X."/>
            <person name="Nayak B."/>
            <person name="Ranjith Kumar C.T."/>
            <person name="Surjit M."/>
        </authorList>
    </citation>
    <scope>FUNCTION</scope>
</reference>
<organism>
    <name type="scientific">Hepatitis E virus genotype 1 (isolate Human/Pakistan/Sar-55)</name>
    <name type="common">HEV-1</name>
    <dbReference type="NCBI Taxonomy" id="33774"/>
    <lineage>
        <taxon>Viruses</taxon>
        <taxon>Riboviria</taxon>
        <taxon>Orthornavirae</taxon>
        <taxon>Kitrinoviricota</taxon>
        <taxon>Alsuviricetes</taxon>
        <taxon>Hepelivirales</taxon>
        <taxon>Hepeviridae</taxon>
        <taxon>Orthohepevirinae</taxon>
        <taxon>Paslahepevirus</taxon>
        <taxon>Hepatitis E virus</taxon>
    </lineage>
</organism>
<proteinExistence type="evidence at transcript level"/>
<comment type="function">
    <text evidence="1">Acts by interacting with multiple viral and host proteins to enhance the activity of viral RNA-dependent RNA polymerase.</text>
</comment>
<comment type="induction">
    <text evidence="1">Endoplasmic reticulum stress conditions initiate the internal translation of ORF4 driven by an internal ribosome entry site-like (IRESl) element.</text>
</comment>
<comment type="miscellaneous">
    <text evidence="3">This ORF is only found in HEV genotype 1.</text>
</comment>
<dbReference type="EMBL" id="AF444002">
    <property type="status" value="NOT_ANNOTATED_CDS"/>
    <property type="molecule type" value="Genomic_RNA"/>
</dbReference>
<dbReference type="Proteomes" id="UP000008498">
    <property type="component" value="Genome"/>
</dbReference>
<evidence type="ECO:0000269" key="1">
    <source>
    </source>
</evidence>
<evidence type="ECO:0000303" key="2">
    <source>
    </source>
</evidence>
<evidence type="ECO:0000305" key="3"/>
<organismHost>
    <name type="scientific">Homo sapiens</name>
    <name type="common">Human</name>
    <dbReference type="NCBI Taxonomy" id="9606"/>
</organismHost>